<keyword id="KW-0131">Cell cycle</keyword>
<keyword id="KW-0132">Cell division</keyword>
<keyword id="KW-0133">Cell shape</keyword>
<keyword id="KW-0961">Cell wall biogenesis/degradation</keyword>
<keyword id="KW-0963">Cytoplasm</keyword>
<keyword id="KW-0274">FAD</keyword>
<keyword id="KW-0285">Flavoprotein</keyword>
<keyword id="KW-0521">NADP</keyword>
<keyword id="KW-0560">Oxidoreductase</keyword>
<keyword id="KW-0573">Peptidoglycan synthesis</keyword>
<keyword id="KW-1185">Reference proteome</keyword>
<proteinExistence type="inferred from homology"/>
<protein>
    <recommendedName>
        <fullName evidence="1">UDP-N-acetylenolpyruvoylglucosamine reductase</fullName>
        <ecNumber evidence="1">1.3.1.98</ecNumber>
    </recommendedName>
    <alternativeName>
        <fullName evidence="1">UDP-N-acetylmuramate dehydrogenase</fullName>
    </alternativeName>
</protein>
<evidence type="ECO:0000255" key="1">
    <source>
        <dbReference type="HAMAP-Rule" id="MF_00037"/>
    </source>
</evidence>
<evidence type="ECO:0000256" key="2">
    <source>
        <dbReference type="SAM" id="MobiDB-lite"/>
    </source>
</evidence>
<organism>
    <name type="scientific">Roseobacter denitrificans (strain ATCC 33942 / OCh 114)</name>
    <name type="common">Erythrobacter sp. (strain OCh 114)</name>
    <name type="synonym">Roseobacter denitrificans</name>
    <dbReference type="NCBI Taxonomy" id="375451"/>
    <lineage>
        <taxon>Bacteria</taxon>
        <taxon>Pseudomonadati</taxon>
        <taxon>Pseudomonadota</taxon>
        <taxon>Alphaproteobacteria</taxon>
        <taxon>Rhodobacterales</taxon>
        <taxon>Roseobacteraceae</taxon>
        <taxon>Roseobacter</taxon>
    </lineage>
</organism>
<dbReference type="EC" id="1.3.1.98" evidence="1"/>
<dbReference type="EMBL" id="CP000362">
    <property type="protein sequence ID" value="ABG32850.1"/>
    <property type="molecule type" value="Genomic_DNA"/>
</dbReference>
<dbReference type="RefSeq" id="WP_011569466.1">
    <property type="nucleotide sequence ID" value="NC_008209.1"/>
</dbReference>
<dbReference type="SMR" id="Q163J3"/>
<dbReference type="STRING" id="375451.RD1_3352"/>
<dbReference type="KEGG" id="rde:RD1_3352"/>
<dbReference type="eggNOG" id="COG0812">
    <property type="taxonomic scope" value="Bacteria"/>
</dbReference>
<dbReference type="HOGENOM" id="CLU_035304_1_0_5"/>
<dbReference type="OrthoDB" id="9804753at2"/>
<dbReference type="UniPathway" id="UPA00219"/>
<dbReference type="Proteomes" id="UP000007029">
    <property type="component" value="Chromosome"/>
</dbReference>
<dbReference type="GO" id="GO:0005829">
    <property type="term" value="C:cytosol"/>
    <property type="evidence" value="ECO:0007669"/>
    <property type="project" value="TreeGrafter"/>
</dbReference>
<dbReference type="GO" id="GO:0071949">
    <property type="term" value="F:FAD binding"/>
    <property type="evidence" value="ECO:0007669"/>
    <property type="project" value="InterPro"/>
</dbReference>
<dbReference type="GO" id="GO:0008762">
    <property type="term" value="F:UDP-N-acetylmuramate dehydrogenase activity"/>
    <property type="evidence" value="ECO:0007669"/>
    <property type="project" value="UniProtKB-UniRule"/>
</dbReference>
<dbReference type="GO" id="GO:0051301">
    <property type="term" value="P:cell division"/>
    <property type="evidence" value="ECO:0007669"/>
    <property type="project" value="UniProtKB-KW"/>
</dbReference>
<dbReference type="GO" id="GO:0071555">
    <property type="term" value="P:cell wall organization"/>
    <property type="evidence" value="ECO:0007669"/>
    <property type="project" value="UniProtKB-KW"/>
</dbReference>
<dbReference type="GO" id="GO:0009252">
    <property type="term" value="P:peptidoglycan biosynthetic process"/>
    <property type="evidence" value="ECO:0007669"/>
    <property type="project" value="UniProtKB-UniRule"/>
</dbReference>
<dbReference type="GO" id="GO:0008360">
    <property type="term" value="P:regulation of cell shape"/>
    <property type="evidence" value="ECO:0007669"/>
    <property type="project" value="UniProtKB-KW"/>
</dbReference>
<dbReference type="Gene3D" id="3.30.465.10">
    <property type="match status" value="1"/>
</dbReference>
<dbReference type="Gene3D" id="3.90.78.10">
    <property type="entry name" value="UDP-N-acetylenolpyruvoylglucosamine reductase, C-terminal domain"/>
    <property type="match status" value="1"/>
</dbReference>
<dbReference type="Gene3D" id="3.30.43.10">
    <property type="entry name" value="Uridine Diphospho-n-acetylenolpyruvylglucosamine Reductase, domain 2"/>
    <property type="match status" value="1"/>
</dbReference>
<dbReference type="HAMAP" id="MF_00037">
    <property type="entry name" value="MurB"/>
    <property type="match status" value="1"/>
</dbReference>
<dbReference type="InterPro" id="IPR016166">
    <property type="entry name" value="FAD-bd_PCMH"/>
</dbReference>
<dbReference type="InterPro" id="IPR036318">
    <property type="entry name" value="FAD-bd_PCMH-like_sf"/>
</dbReference>
<dbReference type="InterPro" id="IPR016167">
    <property type="entry name" value="FAD-bd_PCMH_sub1"/>
</dbReference>
<dbReference type="InterPro" id="IPR016169">
    <property type="entry name" value="FAD-bd_PCMH_sub2"/>
</dbReference>
<dbReference type="InterPro" id="IPR003170">
    <property type="entry name" value="MurB"/>
</dbReference>
<dbReference type="InterPro" id="IPR011601">
    <property type="entry name" value="MurB_C"/>
</dbReference>
<dbReference type="InterPro" id="IPR036635">
    <property type="entry name" value="MurB_C_sf"/>
</dbReference>
<dbReference type="InterPro" id="IPR006094">
    <property type="entry name" value="Oxid_FAD_bind_N"/>
</dbReference>
<dbReference type="NCBIfam" id="TIGR00179">
    <property type="entry name" value="murB"/>
    <property type="match status" value="1"/>
</dbReference>
<dbReference type="NCBIfam" id="NF010480">
    <property type="entry name" value="PRK13905.1"/>
    <property type="match status" value="1"/>
</dbReference>
<dbReference type="PANTHER" id="PTHR21071">
    <property type="entry name" value="UDP-N-ACETYLENOLPYRUVOYLGLUCOSAMINE REDUCTASE"/>
    <property type="match status" value="1"/>
</dbReference>
<dbReference type="PANTHER" id="PTHR21071:SF4">
    <property type="entry name" value="UDP-N-ACETYLENOLPYRUVOYLGLUCOSAMINE REDUCTASE"/>
    <property type="match status" value="1"/>
</dbReference>
<dbReference type="Pfam" id="PF01565">
    <property type="entry name" value="FAD_binding_4"/>
    <property type="match status" value="1"/>
</dbReference>
<dbReference type="Pfam" id="PF02873">
    <property type="entry name" value="MurB_C"/>
    <property type="match status" value="1"/>
</dbReference>
<dbReference type="SUPFAM" id="SSF56176">
    <property type="entry name" value="FAD-binding/transporter-associated domain-like"/>
    <property type="match status" value="1"/>
</dbReference>
<dbReference type="SUPFAM" id="SSF56194">
    <property type="entry name" value="Uridine diphospho-N-Acetylenolpyruvylglucosamine reductase, MurB, C-terminal domain"/>
    <property type="match status" value="1"/>
</dbReference>
<dbReference type="PROSITE" id="PS51387">
    <property type="entry name" value="FAD_PCMH"/>
    <property type="match status" value="1"/>
</dbReference>
<sequence length="309" mass="33245">MSEMPKVRGRLTQARPLSDLTWLRVGGPADWLFQPADVEDLSDFLARLPEEVAVFPMGVGSNLIVRDGGLRCVVIRLGRGFNQIDISGTRVVAGAAALDAHVARKAADAGLDLTFLRTIPGSIGGAVRMNAGCYGSYTADVLVEVQVVSRTGEVTTLAARDLQLGYRHSTLAEGAVLTKAVFEAPRGDPETLHARMTDQLARRDATQPTKERSAGSTFRNPAGFSSTGRSDDVHDLKAWKVIDDAGMRGARRGGAQMSEMHSNFMVNTGRATAADLEGLGEEVRKKVYDSSGITLEWEIMRVGEKLSSD</sequence>
<reference key="1">
    <citation type="journal article" date="2007" name="J. Bacteriol.">
        <title>The complete genome sequence of Roseobacter denitrificans reveals a mixotrophic rather than photosynthetic metabolism.</title>
        <authorList>
            <person name="Swingley W.D."/>
            <person name="Sadekar S."/>
            <person name="Mastrian S.D."/>
            <person name="Matthies H.J."/>
            <person name="Hao J."/>
            <person name="Ramos H."/>
            <person name="Acharya C.R."/>
            <person name="Conrad A.L."/>
            <person name="Taylor H.L."/>
            <person name="Dejesa L.C."/>
            <person name="Shah M.K."/>
            <person name="O'Huallachain M.E."/>
            <person name="Lince M.T."/>
            <person name="Blankenship R.E."/>
            <person name="Beatty J.T."/>
            <person name="Touchman J.W."/>
        </authorList>
    </citation>
    <scope>NUCLEOTIDE SEQUENCE [LARGE SCALE GENOMIC DNA]</scope>
    <source>
        <strain>ATCC 33942 / OCh 114</strain>
    </source>
</reference>
<gene>
    <name evidence="1" type="primary">murB</name>
    <name type="ordered locus">RD1_3352</name>
</gene>
<name>MURB_ROSDO</name>
<feature type="chain" id="PRO_1000002911" description="UDP-N-acetylenolpyruvoylglucosamine reductase">
    <location>
        <begin position="1"/>
        <end position="309"/>
    </location>
</feature>
<feature type="domain" description="FAD-binding PCMH-type" evidence="1">
    <location>
        <begin position="24"/>
        <end position="187"/>
    </location>
</feature>
<feature type="region of interest" description="Disordered" evidence="2">
    <location>
        <begin position="200"/>
        <end position="230"/>
    </location>
</feature>
<feature type="compositionally biased region" description="Basic and acidic residues" evidence="2">
    <location>
        <begin position="200"/>
        <end position="213"/>
    </location>
</feature>
<feature type="compositionally biased region" description="Polar residues" evidence="2">
    <location>
        <begin position="214"/>
        <end position="228"/>
    </location>
</feature>
<feature type="active site" evidence="1">
    <location>
        <position position="167"/>
    </location>
</feature>
<feature type="active site" description="Proton donor" evidence="1">
    <location>
        <position position="216"/>
    </location>
</feature>
<feature type="active site" evidence="1">
    <location>
        <position position="298"/>
    </location>
</feature>
<comment type="function">
    <text evidence="1">Cell wall formation.</text>
</comment>
<comment type="catalytic activity">
    <reaction evidence="1">
        <text>UDP-N-acetyl-alpha-D-muramate + NADP(+) = UDP-N-acetyl-3-O-(1-carboxyvinyl)-alpha-D-glucosamine + NADPH + H(+)</text>
        <dbReference type="Rhea" id="RHEA:12248"/>
        <dbReference type="ChEBI" id="CHEBI:15378"/>
        <dbReference type="ChEBI" id="CHEBI:57783"/>
        <dbReference type="ChEBI" id="CHEBI:58349"/>
        <dbReference type="ChEBI" id="CHEBI:68483"/>
        <dbReference type="ChEBI" id="CHEBI:70757"/>
        <dbReference type="EC" id="1.3.1.98"/>
    </reaction>
</comment>
<comment type="cofactor">
    <cofactor evidence="1">
        <name>FAD</name>
        <dbReference type="ChEBI" id="CHEBI:57692"/>
    </cofactor>
</comment>
<comment type="pathway">
    <text evidence="1">Cell wall biogenesis; peptidoglycan biosynthesis.</text>
</comment>
<comment type="subcellular location">
    <subcellularLocation>
        <location evidence="1">Cytoplasm</location>
    </subcellularLocation>
</comment>
<comment type="similarity">
    <text evidence="1">Belongs to the MurB family.</text>
</comment>
<accession>Q163J3</accession>